<dbReference type="EMBL" id="AY151386">
    <property type="protein sequence ID" value="AAO05967.1"/>
    <property type="molecule type" value="mRNA"/>
</dbReference>
<dbReference type="EMBL" id="AF044917">
    <property type="protein sequence ID" value="AAF22368.1"/>
    <property type="molecule type" value="Genomic_DNA"/>
</dbReference>
<dbReference type="EMBL" id="AF044918">
    <property type="protein sequence ID" value="AAF22369.1"/>
    <property type="molecule type" value="Genomic_DNA"/>
</dbReference>
<dbReference type="EMBL" id="AK025592">
    <property type="protein sequence ID" value="BAB15182.1"/>
    <property type="molecule type" value="mRNA"/>
</dbReference>
<dbReference type="EMBL" id="AK290637">
    <property type="protein sequence ID" value="BAF83326.1"/>
    <property type="molecule type" value="mRNA"/>
</dbReference>
<dbReference type="EMBL" id="AC092503">
    <property type="status" value="NOT_ANNOTATED_CDS"/>
    <property type="molecule type" value="Genomic_DNA"/>
</dbReference>
<dbReference type="EMBL" id="AC098616">
    <property type="status" value="NOT_ANNOTATED_CDS"/>
    <property type="molecule type" value="Genomic_DNA"/>
</dbReference>
<dbReference type="EMBL" id="CH471055">
    <property type="protein sequence ID" value="EAW64395.1"/>
    <property type="molecule type" value="Genomic_DNA"/>
</dbReference>
<dbReference type="CCDS" id="CCDS2647.1">
    <molecule id="Q9H6S1-1"/>
</dbReference>
<dbReference type="CCDS" id="CCDS46782.1">
    <molecule id="Q9H6S1-4"/>
</dbReference>
<dbReference type="CCDS" id="CCDS46783.1">
    <molecule id="Q9H6S1-5"/>
</dbReference>
<dbReference type="RefSeq" id="NP_001127904.1">
    <molecule id="Q9H6S1-4"/>
    <property type="nucleotide sequence ID" value="NM_001134432.2"/>
</dbReference>
<dbReference type="RefSeq" id="NP_001127905.1">
    <molecule id="Q9H6S1-5"/>
    <property type="nucleotide sequence ID" value="NM_001134433.2"/>
</dbReference>
<dbReference type="RefSeq" id="NP_071906.1">
    <molecule id="Q9H6S1-1"/>
    <property type="nucleotide sequence ID" value="NM_022461.5"/>
</dbReference>
<dbReference type="RefSeq" id="XP_005265449.1">
    <molecule id="Q9H6S1-1"/>
    <property type="nucleotide sequence ID" value="XM_005265392.4"/>
</dbReference>
<dbReference type="RefSeq" id="XP_047304674.1">
    <molecule id="Q9H6S1-1"/>
    <property type="nucleotide sequence ID" value="XM_047448718.1"/>
</dbReference>
<dbReference type="RefSeq" id="XP_054203514.1">
    <molecule id="Q9H6S1-1"/>
    <property type="nucleotide sequence ID" value="XM_054347539.1"/>
</dbReference>
<dbReference type="PDB" id="5EP6">
    <property type="method" value="X-ray"/>
    <property type="resolution" value="1.45 A"/>
    <property type="chains" value="A/C=215-255"/>
</dbReference>
<dbReference type="PDB" id="5Z7G">
    <property type="method" value="X-ray"/>
    <property type="resolution" value="2.30 A"/>
    <property type="chains" value="C/D=33-75"/>
</dbReference>
<dbReference type="PDB" id="5Z7L">
    <property type="method" value="X-ray"/>
    <property type="resolution" value="2.02 A"/>
    <property type="chains" value="C/D=33-75"/>
</dbReference>
<dbReference type="PDB" id="7EA2">
    <property type="method" value="X-ray"/>
    <property type="resolution" value="2.14 A"/>
    <property type="chains" value="A/B=6-16"/>
</dbReference>
<dbReference type="PDB" id="7EA7">
    <property type="method" value="X-ray"/>
    <property type="resolution" value="2.69 A"/>
    <property type="chains" value="C=6-16"/>
</dbReference>
<dbReference type="PDBsum" id="5EP6"/>
<dbReference type="PDBsum" id="5Z7G"/>
<dbReference type="PDBsum" id="5Z7L"/>
<dbReference type="PDBsum" id="7EA2"/>
<dbReference type="PDBsum" id="7EA7"/>
<dbReference type="SMR" id="Q9H6S1"/>
<dbReference type="BioGRID" id="122142">
    <property type="interactions" value="42"/>
</dbReference>
<dbReference type="ComplexPortal" id="CPX-6038">
    <property type="entry name" value="TBK1-IKKepsilon-NAP1 complex"/>
</dbReference>
<dbReference type="CORUM" id="Q9H6S1"/>
<dbReference type="DIP" id="DIP-27605N"/>
<dbReference type="FunCoup" id="Q9H6S1">
    <property type="interactions" value="803"/>
</dbReference>
<dbReference type="IntAct" id="Q9H6S1">
    <property type="interactions" value="24"/>
</dbReference>
<dbReference type="MINT" id="Q9H6S1"/>
<dbReference type="STRING" id="9606.ENSP00000419371"/>
<dbReference type="ChEMBL" id="CHEMBL4523456"/>
<dbReference type="iPTMnet" id="Q9H6S1"/>
<dbReference type="MetOSite" id="Q9H6S1"/>
<dbReference type="PhosphoSitePlus" id="Q9H6S1"/>
<dbReference type="BioMuta" id="AZI2"/>
<dbReference type="DMDM" id="74718550"/>
<dbReference type="jPOST" id="Q9H6S1"/>
<dbReference type="MassIVE" id="Q9H6S1"/>
<dbReference type="PaxDb" id="9606-ENSP00000419371"/>
<dbReference type="PeptideAtlas" id="Q9H6S1"/>
<dbReference type="ProteomicsDB" id="43401"/>
<dbReference type="ProteomicsDB" id="81026">
    <molecule id="Q9H6S1-1"/>
</dbReference>
<dbReference type="ProteomicsDB" id="81027">
    <molecule id="Q9H6S1-3"/>
</dbReference>
<dbReference type="ProteomicsDB" id="9412"/>
<dbReference type="Pumba" id="Q9H6S1"/>
<dbReference type="Antibodypedia" id="27537">
    <property type="antibodies" value="129 antibodies from 24 providers"/>
</dbReference>
<dbReference type="DNASU" id="64343"/>
<dbReference type="Ensembl" id="ENST00000334100.10">
    <molecule id="Q9H6S1-5"/>
    <property type="protein sequence ID" value="ENSP00000335609.6"/>
    <property type="gene ID" value="ENSG00000163512.14"/>
</dbReference>
<dbReference type="Ensembl" id="ENST00000420543.6">
    <molecule id="Q9H6S1-4"/>
    <property type="protein sequence ID" value="ENSP00000391696.2"/>
    <property type="gene ID" value="ENSG00000163512.14"/>
</dbReference>
<dbReference type="Ensembl" id="ENST00000457172.5">
    <molecule id="Q9H6S1-4"/>
    <property type="protein sequence ID" value="ENSP00000389577.1"/>
    <property type="gene ID" value="ENSG00000163512.14"/>
</dbReference>
<dbReference type="Ensembl" id="ENST00000479665.6">
    <molecule id="Q9H6S1-1"/>
    <property type="protein sequence ID" value="ENSP00000419371.1"/>
    <property type="gene ID" value="ENSG00000163512.14"/>
</dbReference>
<dbReference type="GeneID" id="64343"/>
<dbReference type="KEGG" id="hsa:64343"/>
<dbReference type="MANE-Select" id="ENST00000479665.6">
    <property type="protein sequence ID" value="ENSP00000419371.1"/>
    <property type="RefSeq nucleotide sequence ID" value="NM_022461.5"/>
    <property type="RefSeq protein sequence ID" value="NP_071906.1"/>
</dbReference>
<dbReference type="UCSC" id="uc003ceb.5">
    <molecule id="Q9H6S1-1"/>
    <property type="organism name" value="human"/>
</dbReference>
<dbReference type="AGR" id="HGNC:24002"/>
<dbReference type="CTD" id="64343"/>
<dbReference type="DisGeNET" id="64343"/>
<dbReference type="GeneCards" id="AZI2"/>
<dbReference type="HGNC" id="HGNC:24002">
    <property type="gene designation" value="AZI2"/>
</dbReference>
<dbReference type="HPA" id="ENSG00000163512">
    <property type="expression patterns" value="Low tissue specificity"/>
</dbReference>
<dbReference type="MIM" id="609916">
    <property type="type" value="gene"/>
</dbReference>
<dbReference type="neXtProt" id="NX_Q9H6S1"/>
<dbReference type="OpenTargets" id="ENSG00000163512"/>
<dbReference type="PharmGKB" id="PA134950985"/>
<dbReference type="VEuPathDB" id="HostDB:ENSG00000163512"/>
<dbReference type="eggNOG" id="ENOG502QV07">
    <property type="taxonomic scope" value="Eukaryota"/>
</dbReference>
<dbReference type="GeneTree" id="ENSGT00940000153704"/>
<dbReference type="InParanoid" id="Q9H6S1"/>
<dbReference type="OMA" id="PWPSQSC"/>
<dbReference type="OrthoDB" id="8744179at2759"/>
<dbReference type="PAN-GO" id="Q9H6S1">
    <property type="GO annotations" value="2 GO annotations based on evolutionary models"/>
</dbReference>
<dbReference type="PhylomeDB" id="Q9H6S1"/>
<dbReference type="TreeFam" id="TF331289"/>
<dbReference type="PathwayCommons" id="Q9H6S1"/>
<dbReference type="SignaLink" id="Q9H6S1"/>
<dbReference type="BioGRID-ORCS" id="64343">
    <property type="hits" value="50 hits in 1152 CRISPR screens"/>
</dbReference>
<dbReference type="CD-CODE" id="E8F4C1F2">
    <property type="entry name" value="Sint speckle"/>
</dbReference>
<dbReference type="ChiTaRS" id="AZI2">
    <property type="organism name" value="human"/>
</dbReference>
<dbReference type="GeneWiki" id="AZI2"/>
<dbReference type="GenomeRNAi" id="64343"/>
<dbReference type="Pharos" id="Q9H6S1">
    <property type="development level" value="Tbio"/>
</dbReference>
<dbReference type="PRO" id="PR:Q9H6S1"/>
<dbReference type="Proteomes" id="UP000005640">
    <property type="component" value="Chromosome 3"/>
</dbReference>
<dbReference type="RNAct" id="Q9H6S1">
    <property type="molecule type" value="protein"/>
</dbReference>
<dbReference type="Bgee" id="ENSG00000163512">
    <property type="expression patterns" value="Expressed in stromal cell of endometrium and 196 other cell types or tissues"/>
</dbReference>
<dbReference type="ExpressionAtlas" id="Q9H6S1">
    <property type="expression patterns" value="baseline and differential"/>
</dbReference>
<dbReference type="GO" id="GO:0005737">
    <property type="term" value="C:cytoplasm"/>
    <property type="evidence" value="ECO:0000318"/>
    <property type="project" value="GO_Central"/>
</dbReference>
<dbReference type="GO" id="GO:1902554">
    <property type="term" value="C:serine/threonine protein kinase complex"/>
    <property type="evidence" value="ECO:0000303"/>
    <property type="project" value="ComplexPortal"/>
</dbReference>
<dbReference type="GO" id="GO:0051607">
    <property type="term" value="P:defense response to virus"/>
    <property type="evidence" value="ECO:0000303"/>
    <property type="project" value="ComplexPortal"/>
</dbReference>
<dbReference type="GO" id="GO:0097028">
    <property type="term" value="P:dendritic cell differentiation"/>
    <property type="evidence" value="ECO:0007669"/>
    <property type="project" value="Ensembl"/>
</dbReference>
<dbReference type="GO" id="GO:0044565">
    <property type="term" value="P:dendritic cell proliferation"/>
    <property type="evidence" value="ECO:0007669"/>
    <property type="project" value="Ensembl"/>
</dbReference>
<dbReference type="GO" id="GO:0000278">
    <property type="term" value="P:mitotic cell cycle"/>
    <property type="evidence" value="ECO:0007669"/>
    <property type="project" value="Ensembl"/>
</dbReference>
<dbReference type="GO" id="GO:0043124">
    <property type="term" value="P:negative regulation of canonical NF-kappaB signal transduction"/>
    <property type="evidence" value="ECO:0007669"/>
    <property type="project" value="Ensembl"/>
</dbReference>
<dbReference type="GO" id="GO:0042110">
    <property type="term" value="P:T cell activation"/>
    <property type="evidence" value="ECO:0007669"/>
    <property type="project" value="Ensembl"/>
</dbReference>
<dbReference type="GO" id="GO:0060337">
    <property type="term" value="P:type I interferon-mediated signaling pathway"/>
    <property type="evidence" value="ECO:0000303"/>
    <property type="project" value="ComplexPortal"/>
</dbReference>
<dbReference type="InterPro" id="IPR024581">
    <property type="entry name" value="TBD"/>
</dbReference>
<dbReference type="InterPro" id="IPR051891">
    <property type="entry name" value="TBK1-IKBKE_adapters"/>
</dbReference>
<dbReference type="PANTHER" id="PTHR14432:SF6">
    <property type="entry name" value="5-AZACYTIDINE-INDUCED PROTEIN 2"/>
    <property type="match status" value="1"/>
</dbReference>
<dbReference type="PANTHER" id="PTHR14432">
    <property type="entry name" value="PROSAPIP2 PROTEIN/5-AZACYTIDINE INDUCED GENE 2"/>
    <property type="match status" value="1"/>
</dbReference>
<dbReference type="Pfam" id="PF12845">
    <property type="entry name" value="TBD"/>
    <property type="match status" value="1"/>
</dbReference>
<keyword id="KW-0002">3D-structure</keyword>
<keyword id="KW-0025">Alternative splicing</keyword>
<keyword id="KW-0175">Coiled coil</keyword>
<keyword id="KW-0963">Cytoplasm</keyword>
<keyword id="KW-0945">Host-virus interaction</keyword>
<keyword id="KW-0597">Phosphoprotein</keyword>
<keyword id="KW-1267">Proteomics identification</keyword>
<keyword id="KW-1185">Reference proteome</keyword>
<keyword id="KW-0832">Ubl conjugation</keyword>
<comment type="function">
    <text evidence="4 5 8">Adapter protein which binds TBK1 and IKBKE playing a role in antiviral innate immunity (PubMed:14560022, PubMed:21931631). Activates serine/threonine-protein kinase TBK1 and facilitates its oligomerization (PubMed:14560022, PubMed:21931631). Enhances the phosphorylation of NF-kappa-B p65 subunit RELA by TBK1 (PubMed:14560022, PubMed:21931631). Promotes TBK1-induced as well as TNF-alpha or PMA-induced activation of NF-kappa-B (PubMed:14560022, PubMed:21931631). Participates in IFNB promoter activation via TICAM1 (PubMed:15611223).</text>
</comment>
<comment type="subunit">
    <text evidence="2 4 5 6 8 9 10">Homodimer (By similarity). Interacts with IKBKE (PubMed:14560022, PubMed:17568778). Interacts with TBK1 (PubMed:14560022, PubMed:21931631, PubMed:29251827). Interacts with TICAM1 (PubMed:15611223). Interacts with TAX1BP1 (PubMed:30459273). Interacts with CALCOCO2 (PubMed:30459273).</text>
</comment>
<comment type="subunit">
    <text evidence="7">(Microbial infection) Interacts with vaccinia virus protein C6 (PubMed:21931555).</text>
</comment>
<comment type="interaction">
    <interactant intactId="EBI-359973">
        <id>Q9H6S1</id>
    </interactant>
    <interactant intactId="EBI-356402">
        <id>Q9UHD2</id>
        <label>TBK1</label>
    </interactant>
    <organismsDiffer>false</organismsDiffer>
    <experiments>7</experiments>
</comment>
<comment type="interaction">
    <interactant intactId="EBI-359973">
        <id>Q9H6S1</id>
    </interactant>
    <interactant intactId="EBI-9519257">
        <id>P17362</id>
        <label>OPG029</label>
    </interactant>
    <organismsDiffer>true</organismsDiffer>
    <experiments>2</experiments>
</comment>
<comment type="interaction">
    <interactant intactId="EBI-359973">
        <id>Q9H6S1</id>
    </interactant>
    <interactant intactId="EBI-11361108">
        <id>Q9E7P0</id>
    </interactant>
    <organismsDiffer>true</organismsDiffer>
    <experiments>2</experiments>
</comment>
<comment type="subcellular location">
    <subcellularLocation>
        <location evidence="4">Cytoplasm</location>
    </subcellularLocation>
</comment>
<comment type="alternative products">
    <event type="alternative splicing"/>
    <isoform>
        <id>Q9H6S1-1</id>
        <name>1</name>
        <name>Long</name>
        <sequence type="displayed"/>
    </isoform>
    <isoform>
        <id>Q9H6S1-3</id>
        <name>2</name>
        <name>Short</name>
        <sequence type="described" ref="VSP_023817 VSP_023818"/>
    </isoform>
    <isoform>
        <id>Q9H6S1-4</id>
        <name>3</name>
        <sequence type="described" ref="VSP_047087 VSP_047090"/>
    </isoform>
    <isoform>
        <id>Q9H6S1-5</id>
        <name>4</name>
        <sequence type="described" ref="VSP_047088 VSP_047089"/>
    </isoform>
</comment>
<comment type="tissue specificity">
    <text evidence="4">Widely expressed (PubMed:14560022). Abundant expression seen in the pancreas and testis (PubMed:14560022).</text>
</comment>
<comment type="PTM">
    <text evidence="2">Ubiquitinated via 'Lys-48'-linked polyubiquitination by TRIM38, leading to its degradation.</text>
</comment>
<name>AZI2_HUMAN</name>
<accession>Q9H6S1</accession>
<accession>A8K3M2</accession>
<accession>C9JB40</accession>
<accession>H7BXU6</accession>
<accession>Q86W99</accession>
<accession>Q9BQF1</accession>
<reference key="1">
    <citation type="journal article" date="2003" name="Mol. Cell. Biol.">
        <title>Identification of NAP1, a regulatory subunit of IkappaB kinase-related kinases that potentiates NF-kappaB signaling.</title>
        <authorList>
            <person name="Fujita F."/>
            <person name="Taniguchi Y."/>
            <person name="Kato T."/>
            <person name="Narita Y."/>
            <person name="Furuya A."/>
            <person name="Ogawa T."/>
            <person name="Sakurai H."/>
            <person name="Joh T."/>
            <person name="Itoh M."/>
            <person name="Delhase M."/>
            <person name="Karin M."/>
            <person name="Nakanishi M."/>
        </authorList>
    </citation>
    <scope>NUCLEOTIDE SEQUENCE [MRNA] (ISOFORM 1)</scope>
    <scope>FUNCTION</scope>
    <scope>INTERACTION WITH TBK1 AND IKBKE</scope>
    <scope>SUBCELLULAR LOCATION</scope>
    <scope>TISSUE SPECIFICITY</scope>
</reference>
<reference key="2">
    <citation type="submission" date="1998-01" db="EMBL/GenBank/DDBJ databases">
        <authorList>
            <person name="Inohara N."/>
            <person name="Koseki T."/>
            <person name="Nunez G."/>
        </authorList>
    </citation>
    <scope>NUCLEOTIDE SEQUENCE [GENOMIC DNA]</scope>
    <scope>ALTERNATIVE SPLICING (ISOFORMS 1 AND 2)</scope>
</reference>
<reference key="3">
    <citation type="journal article" date="2004" name="Nat. Genet.">
        <title>Complete sequencing and characterization of 21,243 full-length human cDNAs.</title>
        <authorList>
            <person name="Ota T."/>
            <person name="Suzuki Y."/>
            <person name="Nishikawa T."/>
            <person name="Otsuki T."/>
            <person name="Sugiyama T."/>
            <person name="Irie R."/>
            <person name="Wakamatsu A."/>
            <person name="Hayashi K."/>
            <person name="Sato H."/>
            <person name="Nagai K."/>
            <person name="Kimura K."/>
            <person name="Makita H."/>
            <person name="Sekine M."/>
            <person name="Obayashi M."/>
            <person name="Nishi T."/>
            <person name="Shibahara T."/>
            <person name="Tanaka T."/>
            <person name="Ishii S."/>
            <person name="Yamamoto J."/>
            <person name="Saito K."/>
            <person name="Kawai Y."/>
            <person name="Isono Y."/>
            <person name="Nakamura Y."/>
            <person name="Nagahari K."/>
            <person name="Murakami K."/>
            <person name="Yasuda T."/>
            <person name="Iwayanagi T."/>
            <person name="Wagatsuma M."/>
            <person name="Shiratori A."/>
            <person name="Sudo H."/>
            <person name="Hosoiri T."/>
            <person name="Kaku Y."/>
            <person name="Kodaira H."/>
            <person name="Kondo H."/>
            <person name="Sugawara M."/>
            <person name="Takahashi M."/>
            <person name="Kanda K."/>
            <person name="Yokoi T."/>
            <person name="Furuya T."/>
            <person name="Kikkawa E."/>
            <person name="Omura Y."/>
            <person name="Abe K."/>
            <person name="Kamihara K."/>
            <person name="Katsuta N."/>
            <person name="Sato K."/>
            <person name="Tanikawa M."/>
            <person name="Yamazaki M."/>
            <person name="Ninomiya K."/>
            <person name="Ishibashi T."/>
            <person name="Yamashita H."/>
            <person name="Murakawa K."/>
            <person name="Fujimori K."/>
            <person name="Tanai H."/>
            <person name="Kimata M."/>
            <person name="Watanabe M."/>
            <person name="Hiraoka S."/>
            <person name="Chiba Y."/>
            <person name="Ishida S."/>
            <person name="Ono Y."/>
            <person name="Takiguchi S."/>
            <person name="Watanabe S."/>
            <person name="Yosida M."/>
            <person name="Hotuta T."/>
            <person name="Kusano J."/>
            <person name="Kanehori K."/>
            <person name="Takahashi-Fujii A."/>
            <person name="Hara H."/>
            <person name="Tanase T.-O."/>
            <person name="Nomura Y."/>
            <person name="Togiya S."/>
            <person name="Komai F."/>
            <person name="Hara R."/>
            <person name="Takeuchi K."/>
            <person name="Arita M."/>
            <person name="Imose N."/>
            <person name="Musashino K."/>
            <person name="Yuuki H."/>
            <person name="Oshima A."/>
            <person name="Sasaki N."/>
            <person name="Aotsuka S."/>
            <person name="Yoshikawa Y."/>
            <person name="Matsunawa H."/>
            <person name="Ichihara T."/>
            <person name="Shiohata N."/>
            <person name="Sano S."/>
            <person name="Moriya S."/>
            <person name="Momiyama H."/>
            <person name="Satoh N."/>
            <person name="Takami S."/>
            <person name="Terashima Y."/>
            <person name="Suzuki O."/>
            <person name="Nakagawa S."/>
            <person name="Senoh A."/>
            <person name="Mizoguchi H."/>
            <person name="Goto Y."/>
            <person name="Shimizu F."/>
            <person name="Wakebe H."/>
            <person name="Hishigaki H."/>
            <person name="Watanabe T."/>
            <person name="Sugiyama A."/>
            <person name="Takemoto M."/>
            <person name="Kawakami B."/>
            <person name="Yamazaki M."/>
            <person name="Watanabe K."/>
            <person name="Kumagai A."/>
            <person name="Itakura S."/>
            <person name="Fukuzumi Y."/>
            <person name="Fujimori Y."/>
            <person name="Komiyama M."/>
            <person name="Tashiro H."/>
            <person name="Tanigami A."/>
            <person name="Fujiwara T."/>
            <person name="Ono T."/>
            <person name="Yamada K."/>
            <person name="Fujii Y."/>
            <person name="Ozaki K."/>
            <person name="Hirao M."/>
            <person name="Ohmori Y."/>
            <person name="Kawabata A."/>
            <person name="Hikiji T."/>
            <person name="Kobatake N."/>
            <person name="Inagaki H."/>
            <person name="Ikema Y."/>
            <person name="Okamoto S."/>
            <person name="Okitani R."/>
            <person name="Kawakami T."/>
            <person name="Noguchi S."/>
            <person name="Itoh T."/>
            <person name="Shigeta K."/>
            <person name="Senba T."/>
            <person name="Matsumura K."/>
            <person name="Nakajima Y."/>
            <person name="Mizuno T."/>
            <person name="Morinaga M."/>
            <person name="Sasaki M."/>
            <person name="Togashi T."/>
            <person name="Oyama M."/>
            <person name="Hata H."/>
            <person name="Watanabe M."/>
            <person name="Komatsu T."/>
            <person name="Mizushima-Sugano J."/>
            <person name="Satoh T."/>
            <person name="Shirai Y."/>
            <person name="Takahashi Y."/>
            <person name="Nakagawa K."/>
            <person name="Okumura K."/>
            <person name="Nagase T."/>
            <person name="Nomura N."/>
            <person name="Kikuchi H."/>
            <person name="Masuho Y."/>
            <person name="Yamashita R."/>
            <person name="Nakai K."/>
            <person name="Yada T."/>
            <person name="Nakamura Y."/>
            <person name="Ohara O."/>
            <person name="Isogai T."/>
            <person name="Sugano S."/>
        </authorList>
    </citation>
    <scope>NUCLEOTIDE SEQUENCE [LARGE SCALE MRNA] (ISOFORM 1)</scope>
    <source>
        <tissue>Embryo</tissue>
        <tissue>Hepatoma</tissue>
    </source>
</reference>
<reference key="4">
    <citation type="journal article" date="2006" name="Nature">
        <title>The DNA sequence, annotation and analysis of human chromosome 3.</title>
        <authorList>
            <person name="Muzny D.M."/>
            <person name="Scherer S.E."/>
            <person name="Kaul R."/>
            <person name="Wang J."/>
            <person name="Yu J."/>
            <person name="Sudbrak R."/>
            <person name="Buhay C.J."/>
            <person name="Chen R."/>
            <person name="Cree A."/>
            <person name="Ding Y."/>
            <person name="Dugan-Rocha S."/>
            <person name="Gill R."/>
            <person name="Gunaratne P."/>
            <person name="Harris R.A."/>
            <person name="Hawes A.C."/>
            <person name="Hernandez J."/>
            <person name="Hodgson A.V."/>
            <person name="Hume J."/>
            <person name="Jackson A."/>
            <person name="Khan Z.M."/>
            <person name="Kovar-Smith C."/>
            <person name="Lewis L.R."/>
            <person name="Lozado R.J."/>
            <person name="Metzker M.L."/>
            <person name="Milosavljevic A."/>
            <person name="Miner G.R."/>
            <person name="Morgan M.B."/>
            <person name="Nazareth L.V."/>
            <person name="Scott G."/>
            <person name="Sodergren E."/>
            <person name="Song X.-Z."/>
            <person name="Steffen D."/>
            <person name="Wei S."/>
            <person name="Wheeler D.A."/>
            <person name="Wright M.W."/>
            <person name="Worley K.C."/>
            <person name="Yuan Y."/>
            <person name="Zhang Z."/>
            <person name="Adams C.Q."/>
            <person name="Ansari-Lari M.A."/>
            <person name="Ayele M."/>
            <person name="Brown M.J."/>
            <person name="Chen G."/>
            <person name="Chen Z."/>
            <person name="Clendenning J."/>
            <person name="Clerc-Blankenburg K.P."/>
            <person name="Chen R."/>
            <person name="Chen Z."/>
            <person name="Davis C."/>
            <person name="Delgado O."/>
            <person name="Dinh H.H."/>
            <person name="Dong W."/>
            <person name="Draper H."/>
            <person name="Ernst S."/>
            <person name="Fu G."/>
            <person name="Gonzalez-Garay M.L."/>
            <person name="Garcia D.K."/>
            <person name="Gillett W."/>
            <person name="Gu J."/>
            <person name="Hao B."/>
            <person name="Haugen E."/>
            <person name="Havlak P."/>
            <person name="He X."/>
            <person name="Hennig S."/>
            <person name="Hu S."/>
            <person name="Huang W."/>
            <person name="Jackson L.R."/>
            <person name="Jacob L.S."/>
            <person name="Kelly S.H."/>
            <person name="Kube M."/>
            <person name="Levy R."/>
            <person name="Li Z."/>
            <person name="Liu B."/>
            <person name="Liu J."/>
            <person name="Liu W."/>
            <person name="Lu J."/>
            <person name="Maheshwari M."/>
            <person name="Nguyen B.-V."/>
            <person name="Okwuonu G.O."/>
            <person name="Palmeiri A."/>
            <person name="Pasternak S."/>
            <person name="Perez L.M."/>
            <person name="Phelps K.A."/>
            <person name="Plopper F.J."/>
            <person name="Qiang B."/>
            <person name="Raymond C."/>
            <person name="Rodriguez R."/>
            <person name="Saenphimmachak C."/>
            <person name="Santibanez J."/>
            <person name="Shen H."/>
            <person name="Shen Y."/>
            <person name="Subramanian S."/>
            <person name="Tabor P.E."/>
            <person name="Verduzco D."/>
            <person name="Waldron L."/>
            <person name="Wang J."/>
            <person name="Wang J."/>
            <person name="Wang Q."/>
            <person name="Williams G.A."/>
            <person name="Wong G.K.-S."/>
            <person name="Yao Z."/>
            <person name="Zhang J."/>
            <person name="Zhang X."/>
            <person name="Zhao G."/>
            <person name="Zhou J."/>
            <person name="Zhou Y."/>
            <person name="Nelson D."/>
            <person name="Lehrach H."/>
            <person name="Reinhardt R."/>
            <person name="Naylor S.L."/>
            <person name="Yang H."/>
            <person name="Olson M."/>
            <person name="Weinstock G."/>
            <person name="Gibbs R.A."/>
        </authorList>
    </citation>
    <scope>NUCLEOTIDE SEQUENCE [LARGE SCALE GENOMIC DNA]</scope>
</reference>
<reference key="5">
    <citation type="submission" date="2005-07" db="EMBL/GenBank/DDBJ databases">
        <authorList>
            <person name="Mural R.J."/>
            <person name="Istrail S."/>
            <person name="Sutton G.G."/>
            <person name="Florea L."/>
            <person name="Halpern A.L."/>
            <person name="Mobarry C.M."/>
            <person name="Lippert R."/>
            <person name="Walenz B."/>
            <person name="Shatkay H."/>
            <person name="Dew I."/>
            <person name="Miller J.R."/>
            <person name="Flanigan M.J."/>
            <person name="Edwards N.J."/>
            <person name="Bolanos R."/>
            <person name="Fasulo D."/>
            <person name="Halldorsson B.V."/>
            <person name="Hannenhalli S."/>
            <person name="Turner R."/>
            <person name="Yooseph S."/>
            <person name="Lu F."/>
            <person name="Nusskern D.R."/>
            <person name="Shue B.C."/>
            <person name="Zheng X.H."/>
            <person name="Zhong F."/>
            <person name="Delcher A.L."/>
            <person name="Huson D.H."/>
            <person name="Kravitz S.A."/>
            <person name="Mouchard L."/>
            <person name="Reinert K."/>
            <person name="Remington K.A."/>
            <person name="Clark A.G."/>
            <person name="Waterman M.S."/>
            <person name="Eichler E.E."/>
            <person name="Adams M.D."/>
            <person name="Hunkapiller M.W."/>
            <person name="Myers E.W."/>
            <person name="Venter J.C."/>
        </authorList>
    </citation>
    <scope>NUCLEOTIDE SEQUENCE [LARGE SCALE GENOMIC DNA]</scope>
</reference>
<reference key="6">
    <citation type="journal article" date="2005" name="J. Immunol.">
        <title>NF-kappaB-activating kinase-associated protein 1 participates in TLR3/Toll-IL-1 homology domain-containing adapter molecule-1-mediated IFN regulatory factor 3 activation.</title>
        <authorList>
            <person name="Sasai M."/>
            <person name="Oshiumi H."/>
            <person name="Matsumoto M."/>
            <person name="Inoue N."/>
            <person name="Fujita F."/>
            <person name="Nakanishi M."/>
            <person name="Seya T."/>
        </authorList>
    </citation>
    <scope>FUNCTION</scope>
    <scope>INTERACTION WITH TICAM1</scope>
</reference>
<reference key="7">
    <citation type="journal article" date="2007" name="EMBO J.">
        <title>SINTBAD, a novel component of innate antiviral immunity, shares a TBK1-binding domain with NAP1 and TANK.</title>
        <authorList>
            <person name="Ryzhakov G."/>
            <person name="Randow F."/>
        </authorList>
    </citation>
    <scope>INTERACTION WITH IKBKE</scope>
</reference>
<reference key="8">
    <citation type="journal article" date="2008" name="Mol. Cell">
        <title>Kinase-selective enrichment enables quantitative phosphoproteomics of the kinome across the cell cycle.</title>
        <authorList>
            <person name="Daub H."/>
            <person name="Olsen J.V."/>
            <person name="Bairlein M."/>
            <person name="Gnad F."/>
            <person name="Oppermann F.S."/>
            <person name="Korner R."/>
            <person name="Greff Z."/>
            <person name="Keri G."/>
            <person name="Stemmann O."/>
            <person name="Mann M."/>
        </authorList>
    </citation>
    <scope>PHOSPHORYLATION [LARGE SCALE ANALYSIS] AT SER-353</scope>
    <scope>IDENTIFICATION BY MASS SPECTROMETRY [LARGE SCALE ANALYSIS]</scope>
    <source>
        <tissue>Cervix carcinoma</tissue>
    </source>
</reference>
<reference key="9">
    <citation type="journal article" date="2009" name="Mol. Cell. Proteomics">
        <title>Large-scale proteomics analysis of the human kinome.</title>
        <authorList>
            <person name="Oppermann F.S."/>
            <person name="Gnad F."/>
            <person name="Olsen J.V."/>
            <person name="Hornberger R."/>
            <person name="Greff Z."/>
            <person name="Keri G."/>
            <person name="Mann M."/>
            <person name="Daub H."/>
        </authorList>
    </citation>
    <scope>PHOSPHORYLATION [LARGE SCALE ANALYSIS] AT SER-353</scope>
    <scope>IDENTIFICATION BY MASS SPECTROMETRY [LARGE SCALE ANALYSIS]</scope>
</reference>
<reference key="10">
    <citation type="journal article" date="2011" name="PLoS ONE">
        <title>Functional dissection of the TBK1 molecular network.</title>
        <authorList>
            <person name="Goncalves A."/>
            <person name="Burckstummer T."/>
            <person name="Dixit E."/>
            <person name="Scheicher R."/>
            <person name="Gorna M.W."/>
            <person name="Karayel E."/>
            <person name="Sugar C."/>
            <person name="Stukalov A."/>
            <person name="Berg T."/>
            <person name="Kralovics R."/>
            <person name="Planyavsky M."/>
            <person name="Bennett K.L."/>
            <person name="Colinge J."/>
            <person name="Superti-Furga G."/>
        </authorList>
    </citation>
    <scope>FUNCTION</scope>
    <scope>INTERACTION WITH TBK1</scope>
</reference>
<reference key="11">
    <citation type="journal article" date="2011" name="PLoS Pathog.">
        <title>Vaccinia virus protein C6 is a virulence factor that binds TBK-1 adaptor proteins and inhibits activation of IRF3 and IRF7.</title>
        <authorList>
            <person name="Unterholzner L."/>
            <person name="Sumner R.P."/>
            <person name="Baran M."/>
            <person name="Ren H."/>
            <person name="Mansur D.S."/>
            <person name="Bourke N.M."/>
            <person name="Randow F."/>
            <person name="Smith G.L."/>
            <person name="Bowie A.G."/>
        </authorList>
    </citation>
    <scope>INTERACTION WITH VACCINIA VIRUS PROTEIN C6</scope>
</reference>
<reference key="12">
    <citation type="journal article" date="2013" name="J. Proteome Res.">
        <title>Toward a comprehensive characterization of a human cancer cell phosphoproteome.</title>
        <authorList>
            <person name="Zhou H."/>
            <person name="Di Palma S."/>
            <person name="Preisinger C."/>
            <person name="Peng M."/>
            <person name="Polat A.N."/>
            <person name="Heck A.J."/>
            <person name="Mohammed S."/>
        </authorList>
    </citation>
    <scope>PHOSPHORYLATION [LARGE SCALE ANALYSIS] AT SER-353</scope>
    <scope>IDENTIFICATION BY MASS SPECTROMETRY [LARGE SCALE ANALYSIS]</scope>
    <source>
        <tissue>Erythroleukemia</tissue>
    </source>
</reference>
<reference key="13">
    <citation type="journal article" date="2014" name="J. Proteomics">
        <title>An enzyme assisted RP-RPLC approach for in-depth analysis of human liver phosphoproteome.</title>
        <authorList>
            <person name="Bian Y."/>
            <person name="Song C."/>
            <person name="Cheng K."/>
            <person name="Dong M."/>
            <person name="Wang F."/>
            <person name="Huang J."/>
            <person name="Sun D."/>
            <person name="Wang L."/>
            <person name="Ye M."/>
            <person name="Zou H."/>
        </authorList>
    </citation>
    <scope>IDENTIFICATION BY MASS SPECTROMETRY [LARGE SCALE ANALYSIS]</scope>
    <source>
        <tissue>Liver</tissue>
    </source>
</reference>
<reference key="14">
    <citation type="journal article" date="2018" name="Proteomics">
        <title>Quantitative Proteomics Identified TTC4 as a TBK1 Interactor and a Positive Regulator of SeV-Induced Innate Immunity.</title>
        <authorList>
            <person name="Shang J."/>
            <person name="Xia T."/>
            <person name="Han Q.Q."/>
            <person name="Zhao X."/>
            <person name="Hu M.M."/>
            <person name="Shu H.B."/>
            <person name="Guo L."/>
        </authorList>
    </citation>
    <scope>INTERACTION WITH TBK1</scope>
</reference>
<reference evidence="14 15" key="15">
    <citation type="journal article" date="2018" name="Proc. Natl. Acad. Sci. U.S.A.">
        <title>Mechanistic insights into the interactions of NAP1 with the SKICH domains of NDP52 and TAX1BP1.</title>
        <authorList>
            <person name="Fu T."/>
            <person name="Liu J."/>
            <person name="Wang Y."/>
            <person name="Xie X."/>
            <person name="Hu S."/>
            <person name="Pan L."/>
        </authorList>
    </citation>
    <scope>X-RAY CRYSTALLOGRAPHY (2.02 ANGSTROMS) OF 33-75</scope>
    <scope>INTERACTION WITH TAXBP1 AND CALCOCO2</scope>
</reference>
<gene>
    <name type="primary">AZI2</name>
    <name evidence="11" type="synonym">NAP1</name>
    <name type="synonym">TBKBP2</name>
</gene>
<sequence length="392" mass="44935">MDALVEDDICILNHEKAHKRDTVTPVSIYSGDESVASHFALVTAYEDIKKRLKDSEKENSLLKKRIRFLEEKLIARFEEETSSVGREQVNKAYHAYREVCIDRDNLKSKLDKMNKDNSESLKVLNEQLQSKEVELLQLRTEVETQQVMRNLNPPSSNWEVEKLSCDLKIHGLEQELELMRKECSDLKIELQKAKQTDPYQEDNLKSRDLQKLSISSDNMQHAYWELKREMSNLHLVTQVQAELLRKLKTSTAIKKACAPVGCSEDLGRDSTKLHLMNFTATYTRHPPLLPNGKALCHTTSSPLPGDVKVLSEKAILQSWTDNERSIPNDGTCFQEHSSYGRNSLEDNSWVFPSPPKSSETAFGETKTKTLPLPNLPPLHYLDQHNQNCLYKN</sequence>
<feature type="chain" id="PRO_0000280602" description="5-azacytidine-induced protein 2">
    <location>
        <begin position="1"/>
        <end position="392"/>
    </location>
</feature>
<feature type="region of interest" description="Homodimerization" evidence="2">
    <location>
        <begin position="1"/>
        <end position="197"/>
    </location>
</feature>
<feature type="region of interest" description="Interaction with TBK1 and IKBKE" evidence="4">
    <location>
        <begin position="216"/>
        <end position="257"/>
    </location>
</feature>
<feature type="coiled-coil region" evidence="3">
    <location>
        <begin position="40"/>
        <end position="76"/>
    </location>
</feature>
<feature type="coiled-coil region" evidence="3">
    <location>
        <begin position="102"/>
        <end position="196"/>
    </location>
</feature>
<feature type="modified residue" description="Phosphoserine" evidence="1">
    <location>
        <position position="318"/>
    </location>
</feature>
<feature type="modified residue" description="Phosphoserine" evidence="16 17 18">
    <location>
        <position position="353"/>
    </location>
</feature>
<feature type="splice variant" id="VSP_047087" description="In isoform 3." evidence="13">
    <original>SDNMQHAYWELKREMSNLHLVTQVQAEL</original>
    <variation>RQSICSTAWSAVAQSWDSMNFEDCSLFA</variation>
    <location>
        <begin position="216"/>
        <end position="243"/>
    </location>
</feature>
<feature type="splice variant" id="VSP_047088" description="In isoform 4." evidence="13">
    <original>SDNMQHAYWELKREMSN</original>
    <variation>RVSVAQPGVQWRNHGIA</variation>
    <location>
        <begin position="216"/>
        <end position="232"/>
    </location>
</feature>
<feature type="splice variant" id="VSP_023817" description="In isoform 2." evidence="13">
    <original>SDNMQHAYWELKR</original>
    <variation>TQPGVQWRNHGIA</variation>
    <location>
        <begin position="216"/>
        <end position="228"/>
    </location>
</feature>
<feature type="splice variant" id="VSP_023818" description="In isoform 2." evidence="13">
    <location>
        <begin position="229"/>
        <end position="392"/>
    </location>
</feature>
<feature type="splice variant" id="VSP_047089" description="In isoform 4." evidence="13">
    <location>
        <begin position="233"/>
        <end position="392"/>
    </location>
</feature>
<feature type="splice variant" id="VSP_047090" description="In isoform 3." evidence="13">
    <location>
        <begin position="244"/>
        <end position="392"/>
    </location>
</feature>
<feature type="strand" evidence="21">
    <location>
        <begin position="8"/>
        <end position="16"/>
    </location>
</feature>
<feature type="helix" evidence="20">
    <location>
        <begin position="34"/>
        <end position="72"/>
    </location>
</feature>
<feature type="helix" evidence="19">
    <location>
        <begin position="216"/>
        <end position="246"/>
    </location>
</feature>
<feature type="strand" evidence="19">
    <location>
        <begin position="247"/>
        <end position="249"/>
    </location>
</feature>
<protein>
    <recommendedName>
        <fullName>5-azacytidine-induced protein 2</fullName>
    </recommendedName>
    <alternativeName>
        <fullName evidence="11">NF-kappa-B-activating kinase-associated protein 1</fullName>
        <shortName evidence="11">Nak-associated protein 1</shortName>
        <shortName evidence="11">Nap1</shortName>
    </alternativeName>
    <alternativeName>
        <fullName evidence="12">TILP</fullName>
    </alternativeName>
</protein>
<proteinExistence type="evidence at protein level"/>
<evidence type="ECO:0000250" key="1">
    <source>
        <dbReference type="UniProtKB" id="Q4KMA0"/>
    </source>
</evidence>
<evidence type="ECO:0000250" key="2">
    <source>
        <dbReference type="UniProtKB" id="Q9QYP6"/>
    </source>
</evidence>
<evidence type="ECO:0000255" key="3"/>
<evidence type="ECO:0000269" key="4">
    <source>
    </source>
</evidence>
<evidence type="ECO:0000269" key="5">
    <source>
    </source>
</evidence>
<evidence type="ECO:0000269" key="6">
    <source>
    </source>
</evidence>
<evidence type="ECO:0000269" key="7">
    <source>
    </source>
</evidence>
<evidence type="ECO:0000269" key="8">
    <source>
    </source>
</evidence>
<evidence type="ECO:0000269" key="9">
    <source>
    </source>
</evidence>
<evidence type="ECO:0000269" key="10">
    <source>
    </source>
</evidence>
<evidence type="ECO:0000303" key="11">
    <source>
    </source>
</evidence>
<evidence type="ECO:0000303" key="12">
    <source ref="2"/>
</evidence>
<evidence type="ECO:0000305" key="13"/>
<evidence type="ECO:0007744" key="14">
    <source>
        <dbReference type="PDB" id="5Z7G"/>
    </source>
</evidence>
<evidence type="ECO:0007744" key="15">
    <source>
        <dbReference type="PDB" id="5Z7L"/>
    </source>
</evidence>
<evidence type="ECO:0007744" key="16">
    <source>
    </source>
</evidence>
<evidence type="ECO:0007744" key="17">
    <source>
    </source>
</evidence>
<evidence type="ECO:0007744" key="18">
    <source>
    </source>
</evidence>
<evidence type="ECO:0007829" key="19">
    <source>
        <dbReference type="PDB" id="5EP6"/>
    </source>
</evidence>
<evidence type="ECO:0007829" key="20">
    <source>
        <dbReference type="PDB" id="5Z7L"/>
    </source>
</evidence>
<evidence type="ECO:0007829" key="21">
    <source>
        <dbReference type="PDB" id="7EA2"/>
    </source>
</evidence>
<organism>
    <name type="scientific">Homo sapiens</name>
    <name type="common">Human</name>
    <dbReference type="NCBI Taxonomy" id="9606"/>
    <lineage>
        <taxon>Eukaryota</taxon>
        <taxon>Metazoa</taxon>
        <taxon>Chordata</taxon>
        <taxon>Craniata</taxon>
        <taxon>Vertebrata</taxon>
        <taxon>Euteleostomi</taxon>
        <taxon>Mammalia</taxon>
        <taxon>Eutheria</taxon>
        <taxon>Euarchontoglires</taxon>
        <taxon>Primates</taxon>
        <taxon>Haplorrhini</taxon>
        <taxon>Catarrhini</taxon>
        <taxon>Hominidae</taxon>
        <taxon>Homo</taxon>
    </lineage>
</organism>